<sequence>MAHIFVYGTLKRGQPNHKVMLDQSHGLATFRGRGCTVESFPLVIAGEHNIPWLLHLPGKGHCVAGEIYEVDEQMLRFLDDFEGCPSMYQRTALQVRVLEWEGAGGPGDSVQCFVYSTATYAPEWLFLPYHKNYDSEGPHGLRYNPRENR</sequence>
<organism>
    <name type="scientific">Rattus norvegicus</name>
    <name type="common">Rat</name>
    <dbReference type="NCBI Taxonomy" id="10116"/>
    <lineage>
        <taxon>Eukaryota</taxon>
        <taxon>Metazoa</taxon>
        <taxon>Chordata</taxon>
        <taxon>Craniata</taxon>
        <taxon>Vertebrata</taxon>
        <taxon>Euteleostomi</taxon>
        <taxon>Mammalia</taxon>
        <taxon>Eutheria</taxon>
        <taxon>Euarchontoglires</taxon>
        <taxon>Glires</taxon>
        <taxon>Rodentia</taxon>
        <taxon>Myomorpha</taxon>
        <taxon>Muroidea</taxon>
        <taxon>Muridae</taxon>
        <taxon>Murinae</taxon>
        <taxon>Rattus</taxon>
    </lineage>
</organism>
<name>GGACT_RAT</name>
<accession>Q4KM86</accession>
<evidence type="ECO:0000250" key="1"/>
<evidence type="ECO:0000250" key="2">
    <source>
        <dbReference type="UniProtKB" id="Q9BVM4"/>
    </source>
</evidence>
<evidence type="ECO:0000305" key="3"/>
<reference key="1">
    <citation type="journal article" date="2004" name="Genome Res.">
        <title>The status, quality, and expansion of the NIH full-length cDNA project: the Mammalian Gene Collection (MGC).</title>
        <authorList>
            <consortium name="The MGC Project Team"/>
        </authorList>
    </citation>
    <scope>NUCLEOTIDE SEQUENCE [LARGE SCALE MRNA]</scope>
    <source>
        <tissue>Thymus</tissue>
    </source>
</reference>
<proteinExistence type="evidence at transcript level"/>
<comment type="function">
    <text evidence="2">Contributes to degradation of proteins cross-linked by transglutaminases by degrading the cross-link between a lysine and a glutamic acid residue. Catalyzes the formation of 5-oxo-L-proline from L-gamma-glutamyl-L-epsilon-lysine. Inactive with L-gamma-glutamyl-alpha-amino acid substrates such as L-gamma-glutamyl-L-alpha-cysteine and L-gamma-glutamyl-L-alpha-alanine.</text>
</comment>
<comment type="catalytic activity">
    <reaction evidence="2">
        <text>epsilon-(gamma-L-glutamyl)-L-lysine = 5-oxo-L-proline + L-lysine</text>
        <dbReference type="Rhea" id="RHEA:16961"/>
        <dbReference type="ChEBI" id="CHEBI:32551"/>
        <dbReference type="ChEBI" id="CHEBI:58402"/>
        <dbReference type="ChEBI" id="CHEBI:133752"/>
        <dbReference type="EC" id="4.3.2.8"/>
    </reaction>
</comment>
<comment type="subunit">
    <text evidence="2">Monomer.</text>
</comment>
<comment type="similarity">
    <text evidence="3">Belongs to the gamma-glutamylcyclotransferase family.</text>
</comment>
<gene>
    <name type="primary">Ggact</name>
    <name type="synonym">A2ld1</name>
</gene>
<feature type="chain" id="PRO_0000320205" description="Gamma-glutamylaminecyclotransferase">
    <location>
        <begin position="1"/>
        <end position="149"/>
    </location>
</feature>
<feature type="active site" description="Proton acceptor" evidence="1">
    <location>
        <position position="82"/>
    </location>
</feature>
<feature type="binding site" evidence="1">
    <location>
        <begin position="7"/>
        <end position="10"/>
    </location>
    <ligand>
        <name>substrate</name>
    </ligand>
</feature>
<dbReference type="EC" id="4.3.2.8" evidence="2"/>
<dbReference type="EMBL" id="BC098699">
    <property type="protein sequence ID" value="AAH98699.1"/>
    <property type="molecule type" value="mRNA"/>
</dbReference>
<dbReference type="SMR" id="Q4KM86"/>
<dbReference type="FunCoup" id="Q4KM86">
    <property type="interactions" value="199"/>
</dbReference>
<dbReference type="STRING" id="10116.ENSRNOP00000000118"/>
<dbReference type="jPOST" id="Q4KM86"/>
<dbReference type="PaxDb" id="10116-ENSRNOP00000000118"/>
<dbReference type="Ensembl" id="ENSRNOT00000119176.1">
    <property type="protein sequence ID" value="ENSRNOP00000092826.1"/>
    <property type="gene ID" value="ENSRNOG00000027040.5"/>
</dbReference>
<dbReference type="AGR" id="RGD:1304748"/>
<dbReference type="RGD" id="1304748">
    <property type="gene designation" value="Ggact"/>
</dbReference>
<dbReference type="eggNOG" id="KOG4450">
    <property type="taxonomic scope" value="Eukaryota"/>
</dbReference>
<dbReference type="GeneTree" id="ENSGT00390000010543"/>
<dbReference type="HOGENOM" id="CLU_083466_1_0_1"/>
<dbReference type="InParanoid" id="Q4KM86"/>
<dbReference type="PhylomeDB" id="Q4KM86"/>
<dbReference type="TreeFam" id="TF323258"/>
<dbReference type="BioCyc" id="MetaCyc:MONOMER-10043"/>
<dbReference type="PRO" id="PR:Q4KM86"/>
<dbReference type="Proteomes" id="UP000002494">
    <property type="component" value="Chromosome 15"/>
</dbReference>
<dbReference type="Bgee" id="ENSRNOG00000027040">
    <property type="expression patterns" value="Expressed in kidney and 19 other cell types or tissues"/>
</dbReference>
<dbReference type="GO" id="GO:0005829">
    <property type="term" value="C:cytosol"/>
    <property type="evidence" value="ECO:0000318"/>
    <property type="project" value="GO_Central"/>
</dbReference>
<dbReference type="GO" id="GO:0061929">
    <property type="term" value="F:gamma-glutamylaminecyclotransferase activity"/>
    <property type="evidence" value="ECO:0000250"/>
    <property type="project" value="UniProtKB"/>
</dbReference>
<dbReference type="GO" id="GO:0042219">
    <property type="term" value="P:modified amino acid catabolic process"/>
    <property type="evidence" value="ECO:0000250"/>
    <property type="project" value="UniProtKB"/>
</dbReference>
<dbReference type="CDD" id="cd06661">
    <property type="entry name" value="GGCT_like"/>
    <property type="match status" value="1"/>
</dbReference>
<dbReference type="FunFam" id="3.10.490.10:FF:000008">
    <property type="entry name" value="Gamma-glutamylaminecyclotransferase A"/>
    <property type="match status" value="1"/>
</dbReference>
<dbReference type="Gene3D" id="3.10.490.10">
    <property type="entry name" value="Gamma-glutamyl cyclotransferase-like"/>
    <property type="match status" value="1"/>
</dbReference>
<dbReference type="InterPro" id="IPR009288">
    <property type="entry name" value="AIG2-like_dom"/>
</dbReference>
<dbReference type="InterPro" id="IPR039126">
    <property type="entry name" value="GGACT"/>
</dbReference>
<dbReference type="InterPro" id="IPR013024">
    <property type="entry name" value="GGCT-like"/>
</dbReference>
<dbReference type="InterPro" id="IPR036568">
    <property type="entry name" value="GGCT-like_sf"/>
</dbReference>
<dbReference type="PANTHER" id="PTHR12510:SF4">
    <property type="entry name" value="GAMMA-GLUTAMYLAMINECYCLOTRANSFERASE"/>
    <property type="match status" value="1"/>
</dbReference>
<dbReference type="PANTHER" id="PTHR12510">
    <property type="entry name" value="TROPONIN C-AKIN-1 PROTEIN"/>
    <property type="match status" value="1"/>
</dbReference>
<dbReference type="Pfam" id="PF06094">
    <property type="entry name" value="GGACT"/>
    <property type="match status" value="1"/>
</dbReference>
<dbReference type="SUPFAM" id="SSF110857">
    <property type="entry name" value="Gamma-glutamyl cyclotransferase-like"/>
    <property type="match status" value="1"/>
</dbReference>
<keyword id="KW-0456">Lyase</keyword>
<keyword id="KW-1185">Reference proteome</keyword>
<protein>
    <recommendedName>
        <fullName>Gamma-glutamylaminecyclotransferase</fullName>
        <shortName>GGACT</shortName>
        <ecNumber evidence="2">4.3.2.8</ecNumber>
    </recommendedName>
    <alternativeName>
        <fullName>AIG2-like domain-containing protein 1</fullName>
    </alternativeName>
    <alternativeName>
        <fullName>Gamma-glutamylamine cyclotransferase</fullName>
    </alternativeName>
</protein>